<dbReference type="EC" id="3.5.4.19" evidence="1"/>
<dbReference type="EMBL" id="CP000479">
    <property type="protein sequence ID" value="ABK67383.1"/>
    <property type="molecule type" value="Genomic_DNA"/>
</dbReference>
<dbReference type="RefSeq" id="WP_011725309.1">
    <property type="nucleotide sequence ID" value="NC_008595.1"/>
</dbReference>
<dbReference type="SMR" id="A0QHH5"/>
<dbReference type="KEGG" id="mav:MAV_3180"/>
<dbReference type="HOGENOM" id="CLU_048577_5_1_11"/>
<dbReference type="UniPathway" id="UPA00031">
    <property type="reaction ID" value="UER00008"/>
</dbReference>
<dbReference type="Proteomes" id="UP000001574">
    <property type="component" value="Chromosome"/>
</dbReference>
<dbReference type="GO" id="GO:0005737">
    <property type="term" value="C:cytoplasm"/>
    <property type="evidence" value="ECO:0007669"/>
    <property type="project" value="UniProtKB-SubCell"/>
</dbReference>
<dbReference type="GO" id="GO:0000287">
    <property type="term" value="F:magnesium ion binding"/>
    <property type="evidence" value="ECO:0007669"/>
    <property type="project" value="UniProtKB-UniRule"/>
</dbReference>
<dbReference type="GO" id="GO:0004635">
    <property type="term" value="F:phosphoribosyl-AMP cyclohydrolase activity"/>
    <property type="evidence" value="ECO:0007669"/>
    <property type="project" value="UniProtKB-UniRule"/>
</dbReference>
<dbReference type="GO" id="GO:0008270">
    <property type="term" value="F:zinc ion binding"/>
    <property type="evidence" value="ECO:0007669"/>
    <property type="project" value="UniProtKB-UniRule"/>
</dbReference>
<dbReference type="GO" id="GO:0000105">
    <property type="term" value="P:L-histidine biosynthetic process"/>
    <property type="evidence" value="ECO:0007669"/>
    <property type="project" value="UniProtKB-UniRule"/>
</dbReference>
<dbReference type="FunFam" id="3.10.20.810:FF:000001">
    <property type="entry name" value="Histidine biosynthesis bifunctional protein HisIE"/>
    <property type="match status" value="1"/>
</dbReference>
<dbReference type="Gene3D" id="3.10.20.810">
    <property type="entry name" value="Phosphoribosyl-AMP cyclohydrolase"/>
    <property type="match status" value="1"/>
</dbReference>
<dbReference type="HAMAP" id="MF_01021">
    <property type="entry name" value="HisI"/>
    <property type="match status" value="1"/>
</dbReference>
<dbReference type="InterPro" id="IPR026660">
    <property type="entry name" value="PRA-CH"/>
</dbReference>
<dbReference type="InterPro" id="IPR002496">
    <property type="entry name" value="PRib_AMP_CycHydrolase_dom"/>
</dbReference>
<dbReference type="InterPro" id="IPR038019">
    <property type="entry name" value="PRib_AMP_CycHydrolase_sf"/>
</dbReference>
<dbReference type="NCBIfam" id="NF000768">
    <property type="entry name" value="PRK00051.1"/>
    <property type="match status" value="1"/>
</dbReference>
<dbReference type="PANTHER" id="PTHR42945">
    <property type="entry name" value="HISTIDINE BIOSYNTHESIS BIFUNCTIONAL PROTEIN"/>
    <property type="match status" value="1"/>
</dbReference>
<dbReference type="PANTHER" id="PTHR42945:SF11">
    <property type="entry name" value="PHOSPHORIBOSYL-AMP CYCLOHYDROLASE"/>
    <property type="match status" value="1"/>
</dbReference>
<dbReference type="Pfam" id="PF01502">
    <property type="entry name" value="PRA-CH"/>
    <property type="match status" value="1"/>
</dbReference>
<dbReference type="SUPFAM" id="SSF141734">
    <property type="entry name" value="HisI-like"/>
    <property type="match status" value="1"/>
</dbReference>
<comment type="function">
    <text evidence="1">Catalyzes the hydrolysis of the adenine ring of phosphoribosyl-AMP.</text>
</comment>
<comment type="catalytic activity">
    <reaction evidence="1">
        <text>1-(5-phospho-beta-D-ribosyl)-5'-AMP + H2O = 1-(5-phospho-beta-D-ribosyl)-5-[(5-phospho-beta-D-ribosylamino)methylideneamino]imidazole-4-carboxamide</text>
        <dbReference type="Rhea" id="RHEA:20049"/>
        <dbReference type="ChEBI" id="CHEBI:15377"/>
        <dbReference type="ChEBI" id="CHEBI:58435"/>
        <dbReference type="ChEBI" id="CHEBI:59457"/>
        <dbReference type="EC" id="3.5.4.19"/>
    </reaction>
</comment>
<comment type="cofactor">
    <cofactor evidence="1">
        <name>Mg(2+)</name>
        <dbReference type="ChEBI" id="CHEBI:18420"/>
    </cofactor>
    <text evidence="1">Binds 1 Mg(2+) ion per subunit.</text>
</comment>
<comment type="cofactor">
    <cofactor evidence="1">
        <name>Zn(2+)</name>
        <dbReference type="ChEBI" id="CHEBI:29105"/>
    </cofactor>
    <text evidence="1">Binds 1 zinc ion per subunit.</text>
</comment>
<comment type="pathway">
    <text evidence="1">Amino-acid biosynthesis; L-histidine biosynthesis; L-histidine from 5-phospho-alpha-D-ribose 1-diphosphate: step 3/9.</text>
</comment>
<comment type="subunit">
    <text evidence="1">Homodimer.</text>
</comment>
<comment type="subcellular location">
    <subcellularLocation>
        <location evidence="1">Cytoplasm</location>
    </subcellularLocation>
</comment>
<comment type="similarity">
    <text evidence="1">Belongs to the PRA-CH family.</text>
</comment>
<proteinExistence type="inferred from homology"/>
<accession>A0QHH5</accession>
<feature type="chain" id="PRO_1000063412" description="Phosphoribosyl-AMP cyclohydrolase">
    <location>
        <begin position="1"/>
        <end position="115"/>
    </location>
</feature>
<feature type="binding site" evidence="1">
    <location>
        <position position="80"/>
    </location>
    <ligand>
        <name>Mg(2+)</name>
        <dbReference type="ChEBI" id="CHEBI:18420"/>
    </ligand>
</feature>
<feature type="binding site" evidence="1">
    <location>
        <position position="81"/>
    </location>
    <ligand>
        <name>Zn(2+)</name>
        <dbReference type="ChEBI" id="CHEBI:29105"/>
        <note>ligand shared between dimeric partners</note>
    </ligand>
</feature>
<feature type="binding site" evidence="1">
    <location>
        <position position="82"/>
    </location>
    <ligand>
        <name>Mg(2+)</name>
        <dbReference type="ChEBI" id="CHEBI:18420"/>
    </ligand>
</feature>
<feature type="binding site" evidence="1">
    <location>
        <position position="84"/>
    </location>
    <ligand>
        <name>Mg(2+)</name>
        <dbReference type="ChEBI" id="CHEBI:18420"/>
    </ligand>
</feature>
<feature type="binding site" evidence="1">
    <location>
        <position position="97"/>
    </location>
    <ligand>
        <name>Zn(2+)</name>
        <dbReference type="ChEBI" id="CHEBI:29105"/>
        <note>ligand shared between dimeric partners</note>
    </ligand>
</feature>
<feature type="binding site" evidence="1">
    <location>
        <position position="104"/>
    </location>
    <ligand>
        <name>Zn(2+)</name>
        <dbReference type="ChEBI" id="CHEBI:29105"/>
        <note>ligand shared between dimeric partners</note>
    </ligand>
</feature>
<keyword id="KW-0028">Amino-acid biosynthesis</keyword>
<keyword id="KW-0963">Cytoplasm</keyword>
<keyword id="KW-0368">Histidine biosynthesis</keyword>
<keyword id="KW-0378">Hydrolase</keyword>
<keyword id="KW-0460">Magnesium</keyword>
<keyword id="KW-0479">Metal-binding</keyword>
<keyword id="KW-0862">Zinc</keyword>
<evidence type="ECO:0000255" key="1">
    <source>
        <dbReference type="HAMAP-Rule" id="MF_01021"/>
    </source>
</evidence>
<gene>
    <name evidence="1" type="primary">hisI</name>
    <name type="ordered locus">MAV_3180</name>
</gene>
<sequence length="115" mass="12702">MMLDPQIAARLKRNADGLVTAVVQERGSRDVLMVAWMDDAALARTLETREATYYSRSRGQQWVKGETSGHTQYVHSVRLDCDGDTVLLTVDQVGGACHTGDHSCFDADVLLHPQD</sequence>
<organism>
    <name type="scientific">Mycobacterium avium (strain 104)</name>
    <dbReference type="NCBI Taxonomy" id="243243"/>
    <lineage>
        <taxon>Bacteria</taxon>
        <taxon>Bacillati</taxon>
        <taxon>Actinomycetota</taxon>
        <taxon>Actinomycetes</taxon>
        <taxon>Mycobacteriales</taxon>
        <taxon>Mycobacteriaceae</taxon>
        <taxon>Mycobacterium</taxon>
        <taxon>Mycobacterium avium complex (MAC)</taxon>
    </lineage>
</organism>
<reference key="1">
    <citation type="submission" date="2006-10" db="EMBL/GenBank/DDBJ databases">
        <authorList>
            <person name="Fleischmann R.D."/>
            <person name="Dodson R.J."/>
            <person name="Haft D.H."/>
            <person name="Merkel J.S."/>
            <person name="Nelson W.C."/>
            <person name="Fraser C.M."/>
        </authorList>
    </citation>
    <scope>NUCLEOTIDE SEQUENCE [LARGE SCALE GENOMIC DNA]</scope>
    <source>
        <strain>104</strain>
    </source>
</reference>
<protein>
    <recommendedName>
        <fullName evidence="1">Phosphoribosyl-AMP cyclohydrolase</fullName>
        <shortName evidence="1">PRA-CH</shortName>
        <ecNumber evidence="1">3.5.4.19</ecNumber>
    </recommendedName>
</protein>
<name>HIS3_MYCA1</name>